<keyword id="KW-0663">Pyridoxal phosphate</keyword>
<keyword id="KW-0808">Transferase</keyword>
<gene>
    <name type="primary">csd</name>
    <name type="ordered locus">PYRAB02320</name>
    <name type="ORF">PAB0157</name>
</gene>
<sequence length="401" mass="44826">MRIPEDVRKDIPLTQEVIYFDNTATSLTPKPVIEAMDEYYLRYRANVHRGVHRLSQMATQKYEESRKVVADFINAEFDEIAFTKNTSESLNLVALGLEHLFKKGDKIVTTPYEHHSNLLPWQRLAKKKGLKLEFIEGDDEGNLDLADAEKKIKGAKLVAVQHVSNALGVIHEVEELGKMVKEEGAIFVVDAAQSVGHMEVDVKKLKADFLAFSGHKGPMGPTGIGVLYINKEFFDVFEPPLIGGGTIEDVELCCYKLTEPPERFEAGTPNIGGAIGLAAGIKYIEKIGIDKIEKQERKLVKRTTEGLDELEIPWYGPRNLDKHAGVVSFNVPPLHPHDVASVLDEHKIMVRSGHHCALPVMKRLKINGTVRASFHVYNSLEEVETFLGVLEELVKSLRSSQ</sequence>
<dbReference type="EC" id="2.8.1.7"/>
<dbReference type="EMBL" id="AJ248283">
    <property type="protein sequence ID" value="CAB49156.1"/>
    <property type="molecule type" value="Genomic_DNA"/>
</dbReference>
<dbReference type="EMBL" id="HE613800">
    <property type="protein sequence ID" value="CCE69608.1"/>
    <property type="molecule type" value="Genomic_DNA"/>
</dbReference>
<dbReference type="PIR" id="E75213">
    <property type="entry name" value="E75213"/>
</dbReference>
<dbReference type="RefSeq" id="WP_010867356.1">
    <property type="nucleotide sequence ID" value="NC_000868.1"/>
</dbReference>
<dbReference type="SMR" id="Q9V242"/>
<dbReference type="STRING" id="272844.PAB0157"/>
<dbReference type="KEGG" id="pab:PAB0157"/>
<dbReference type="PATRIC" id="fig|272844.11.peg.248"/>
<dbReference type="eggNOG" id="arCOG00065">
    <property type="taxonomic scope" value="Archaea"/>
</dbReference>
<dbReference type="HOGENOM" id="CLU_003433_2_5_2"/>
<dbReference type="OrthoDB" id="5817at2157"/>
<dbReference type="PhylomeDB" id="Q9V242"/>
<dbReference type="Proteomes" id="UP000000810">
    <property type="component" value="Chromosome"/>
</dbReference>
<dbReference type="Proteomes" id="UP000009139">
    <property type="component" value="Chromosome"/>
</dbReference>
<dbReference type="GO" id="GO:0031071">
    <property type="term" value="F:cysteine desulfurase activity"/>
    <property type="evidence" value="ECO:0007669"/>
    <property type="project" value="UniProtKB-EC"/>
</dbReference>
<dbReference type="GO" id="GO:0030170">
    <property type="term" value="F:pyridoxal phosphate binding"/>
    <property type="evidence" value="ECO:0007669"/>
    <property type="project" value="InterPro"/>
</dbReference>
<dbReference type="GO" id="GO:0006534">
    <property type="term" value="P:cysteine metabolic process"/>
    <property type="evidence" value="ECO:0007669"/>
    <property type="project" value="InterPro"/>
</dbReference>
<dbReference type="CDD" id="cd06453">
    <property type="entry name" value="SufS_like"/>
    <property type="match status" value="1"/>
</dbReference>
<dbReference type="Gene3D" id="3.90.1150.10">
    <property type="entry name" value="Aspartate Aminotransferase, domain 1"/>
    <property type="match status" value="1"/>
</dbReference>
<dbReference type="Gene3D" id="3.40.640.10">
    <property type="entry name" value="Type I PLP-dependent aspartate aminotransferase-like (Major domain)"/>
    <property type="match status" value="1"/>
</dbReference>
<dbReference type="InterPro" id="IPR000192">
    <property type="entry name" value="Aminotrans_V_dom"/>
</dbReference>
<dbReference type="InterPro" id="IPR010970">
    <property type="entry name" value="Cys_dSase_SufS"/>
</dbReference>
<dbReference type="InterPro" id="IPR016454">
    <property type="entry name" value="Cysteine_dSase"/>
</dbReference>
<dbReference type="InterPro" id="IPR015424">
    <property type="entry name" value="PyrdxlP-dep_Trfase"/>
</dbReference>
<dbReference type="InterPro" id="IPR015421">
    <property type="entry name" value="PyrdxlP-dep_Trfase_major"/>
</dbReference>
<dbReference type="InterPro" id="IPR015422">
    <property type="entry name" value="PyrdxlP-dep_Trfase_small"/>
</dbReference>
<dbReference type="PANTHER" id="PTHR43586">
    <property type="entry name" value="CYSTEINE DESULFURASE"/>
    <property type="match status" value="1"/>
</dbReference>
<dbReference type="PANTHER" id="PTHR43586:SF8">
    <property type="entry name" value="CYSTEINE DESULFURASE 1, CHLOROPLASTIC"/>
    <property type="match status" value="1"/>
</dbReference>
<dbReference type="Pfam" id="PF00266">
    <property type="entry name" value="Aminotran_5"/>
    <property type="match status" value="1"/>
</dbReference>
<dbReference type="PIRSF" id="PIRSF005572">
    <property type="entry name" value="NifS"/>
    <property type="match status" value="1"/>
</dbReference>
<dbReference type="SUPFAM" id="SSF53383">
    <property type="entry name" value="PLP-dependent transferases"/>
    <property type="match status" value="1"/>
</dbReference>
<feature type="chain" id="PRO_0000150328" description="Probable cysteine desulfurase">
    <location>
        <begin position="1"/>
        <end position="401"/>
    </location>
</feature>
<feature type="modified residue" description="N6-(pyridoxal phosphate)lysine" evidence="1">
    <location>
        <position position="216"/>
    </location>
</feature>
<comment type="catalytic activity">
    <reaction>
        <text>(sulfur carrier)-H + L-cysteine = (sulfur carrier)-SH + L-alanine</text>
        <dbReference type="Rhea" id="RHEA:43892"/>
        <dbReference type="Rhea" id="RHEA-COMP:14737"/>
        <dbReference type="Rhea" id="RHEA-COMP:14739"/>
        <dbReference type="ChEBI" id="CHEBI:29917"/>
        <dbReference type="ChEBI" id="CHEBI:35235"/>
        <dbReference type="ChEBI" id="CHEBI:57972"/>
        <dbReference type="ChEBI" id="CHEBI:64428"/>
        <dbReference type="EC" id="2.8.1.7"/>
    </reaction>
</comment>
<comment type="cofactor">
    <cofactor evidence="1">
        <name>pyridoxal 5'-phosphate</name>
        <dbReference type="ChEBI" id="CHEBI:597326"/>
    </cofactor>
</comment>
<comment type="similarity">
    <text evidence="2">Belongs to the class-V pyridoxal-phosphate-dependent aminotransferase family. Csd subfamily.</text>
</comment>
<evidence type="ECO:0000250" key="1"/>
<evidence type="ECO:0000305" key="2"/>
<name>CSD_PYRAB</name>
<reference key="1">
    <citation type="journal article" date="2003" name="Mol. Microbiol.">
        <title>An integrated analysis of the genome of the hyperthermophilic archaeon Pyrococcus abyssi.</title>
        <authorList>
            <person name="Cohen G.N."/>
            <person name="Barbe V."/>
            <person name="Flament D."/>
            <person name="Galperin M."/>
            <person name="Heilig R."/>
            <person name="Lecompte O."/>
            <person name="Poch O."/>
            <person name="Prieur D."/>
            <person name="Querellou J."/>
            <person name="Ripp R."/>
            <person name="Thierry J.-C."/>
            <person name="Van der Oost J."/>
            <person name="Weissenbach J."/>
            <person name="Zivanovic Y."/>
            <person name="Forterre P."/>
        </authorList>
    </citation>
    <scope>NUCLEOTIDE SEQUENCE [LARGE SCALE GENOMIC DNA]</scope>
    <source>
        <strain>GE5 / Orsay</strain>
    </source>
</reference>
<reference key="2">
    <citation type="journal article" date="2012" name="Curr. Microbiol.">
        <title>Re-annotation of two hyperthermophilic archaea Pyrococcus abyssi GE5 and Pyrococcus furiosus DSM 3638.</title>
        <authorList>
            <person name="Gao J."/>
            <person name="Wang J."/>
        </authorList>
    </citation>
    <scope>GENOME REANNOTATION</scope>
    <source>
        <strain>GE5 / Orsay</strain>
    </source>
</reference>
<protein>
    <recommendedName>
        <fullName>Probable cysteine desulfurase</fullName>
        <ecNumber>2.8.1.7</ecNumber>
    </recommendedName>
</protein>
<proteinExistence type="inferred from homology"/>
<organism>
    <name type="scientific">Pyrococcus abyssi (strain GE5 / Orsay)</name>
    <dbReference type="NCBI Taxonomy" id="272844"/>
    <lineage>
        <taxon>Archaea</taxon>
        <taxon>Methanobacteriati</taxon>
        <taxon>Methanobacteriota</taxon>
        <taxon>Thermococci</taxon>
        <taxon>Thermococcales</taxon>
        <taxon>Thermococcaceae</taxon>
        <taxon>Pyrococcus</taxon>
    </lineage>
</organism>
<accession>Q9V242</accession>
<accession>G8ZG67</accession>